<reference key="1">
    <citation type="submission" date="2005-10" db="EMBL/GenBank/DDBJ databases">
        <title>Complete sequence of chromosome 3 of Burkholderia sp. 383.</title>
        <authorList>
            <consortium name="US DOE Joint Genome Institute"/>
            <person name="Copeland A."/>
            <person name="Lucas S."/>
            <person name="Lapidus A."/>
            <person name="Barry K."/>
            <person name="Detter J.C."/>
            <person name="Glavina T."/>
            <person name="Hammon N."/>
            <person name="Israni S."/>
            <person name="Pitluck S."/>
            <person name="Chain P."/>
            <person name="Malfatti S."/>
            <person name="Shin M."/>
            <person name="Vergez L."/>
            <person name="Schmutz J."/>
            <person name="Larimer F."/>
            <person name="Land M."/>
            <person name="Kyrpides N."/>
            <person name="Lykidis A."/>
            <person name="Richardson P."/>
        </authorList>
    </citation>
    <scope>NUCLEOTIDE SEQUENCE [LARGE SCALE GENOMIC DNA]</scope>
    <source>
        <strain>ATCC 17760 / DSM 23089 / LMG 22485 / NCIMB 9086 / R18194 / 383</strain>
    </source>
</reference>
<dbReference type="EC" id="7.6.2.14" evidence="1"/>
<dbReference type="EMBL" id="CP000150">
    <property type="protein sequence ID" value="ABB06549.1"/>
    <property type="molecule type" value="Genomic_DNA"/>
</dbReference>
<dbReference type="RefSeq" id="WP_011350192.1">
    <property type="nucleotide sequence ID" value="NC_007509.1"/>
</dbReference>
<dbReference type="SMR" id="Q39LW7"/>
<dbReference type="GeneID" id="45092867"/>
<dbReference type="KEGG" id="bur:Bcep18194_C7505"/>
<dbReference type="PATRIC" id="fig|482957.22.peg.8104"/>
<dbReference type="HOGENOM" id="CLU_000604_1_22_4"/>
<dbReference type="Proteomes" id="UP000002705">
    <property type="component" value="Chromosome 3"/>
</dbReference>
<dbReference type="GO" id="GO:0005886">
    <property type="term" value="C:plasma membrane"/>
    <property type="evidence" value="ECO:0007669"/>
    <property type="project" value="UniProtKB-SubCell"/>
</dbReference>
<dbReference type="GO" id="GO:0005524">
    <property type="term" value="F:ATP binding"/>
    <property type="evidence" value="ECO:0007669"/>
    <property type="project" value="UniProtKB-KW"/>
</dbReference>
<dbReference type="GO" id="GO:0016887">
    <property type="term" value="F:ATP hydrolysis activity"/>
    <property type="evidence" value="ECO:0007669"/>
    <property type="project" value="InterPro"/>
</dbReference>
<dbReference type="CDD" id="cd03293">
    <property type="entry name" value="ABC_NrtD_SsuB_transporters"/>
    <property type="match status" value="1"/>
</dbReference>
<dbReference type="Gene3D" id="3.40.50.300">
    <property type="entry name" value="P-loop containing nucleotide triphosphate hydrolases"/>
    <property type="match status" value="1"/>
</dbReference>
<dbReference type="InterPro" id="IPR003593">
    <property type="entry name" value="AAA+_ATPase"/>
</dbReference>
<dbReference type="InterPro" id="IPR003439">
    <property type="entry name" value="ABC_transporter-like_ATP-bd"/>
</dbReference>
<dbReference type="InterPro" id="IPR017871">
    <property type="entry name" value="ABC_transporter-like_CS"/>
</dbReference>
<dbReference type="InterPro" id="IPR050166">
    <property type="entry name" value="ABC_transporter_ATP-bind"/>
</dbReference>
<dbReference type="InterPro" id="IPR027417">
    <property type="entry name" value="P-loop_NTPase"/>
</dbReference>
<dbReference type="PANTHER" id="PTHR42788:SF19">
    <property type="entry name" value="ALIPHATIC SULFONATES IMPORT ATP-BINDING PROTEIN SSUB 2"/>
    <property type="match status" value="1"/>
</dbReference>
<dbReference type="PANTHER" id="PTHR42788">
    <property type="entry name" value="TAURINE IMPORT ATP-BINDING PROTEIN-RELATED"/>
    <property type="match status" value="1"/>
</dbReference>
<dbReference type="Pfam" id="PF00005">
    <property type="entry name" value="ABC_tran"/>
    <property type="match status" value="1"/>
</dbReference>
<dbReference type="SMART" id="SM00382">
    <property type="entry name" value="AAA"/>
    <property type="match status" value="1"/>
</dbReference>
<dbReference type="SUPFAM" id="SSF52540">
    <property type="entry name" value="P-loop containing nucleoside triphosphate hydrolases"/>
    <property type="match status" value="1"/>
</dbReference>
<dbReference type="PROSITE" id="PS00211">
    <property type="entry name" value="ABC_TRANSPORTER_1"/>
    <property type="match status" value="1"/>
</dbReference>
<dbReference type="PROSITE" id="PS50893">
    <property type="entry name" value="ABC_TRANSPORTER_2"/>
    <property type="match status" value="1"/>
</dbReference>
<dbReference type="PROSITE" id="PS51291">
    <property type="entry name" value="SSUB"/>
    <property type="match status" value="1"/>
</dbReference>
<comment type="function">
    <text evidence="1">Part of the ABC transporter complex SsuABC involved in aliphatic sulfonates import. Responsible for energy coupling to the transport system.</text>
</comment>
<comment type="catalytic activity">
    <reaction evidence="1">
        <text>ATP + H2O + aliphatic sulfonate-[sulfonate-binding protein]Side 1 = ADP + phosphate + aliphatic sulfonateSide 2 + [sulfonate-binding protein]Side 1.</text>
        <dbReference type="EC" id="7.6.2.14"/>
    </reaction>
</comment>
<comment type="subunit">
    <text evidence="1">The complex is composed of two ATP-binding proteins (SsuB), two transmembrane proteins (SsuC) and a solute-binding protein (SsuA).</text>
</comment>
<comment type="subcellular location">
    <subcellularLocation>
        <location evidence="1">Cell inner membrane</location>
        <topology evidence="1">Peripheral membrane protein</topology>
    </subcellularLocation>
</comment>
<comment type="similarity">
    <text evidence="1">Belongs to the ABC transporter superfamily. Aliphatic sulfonates importer (TC 3.A.1.17.2) family.</text>
</comment>
<sequence>MSPPPSAHTAASTATPLLDLRITRKLYGDRTILADVPLQVARGEIVCVVGPSGCGKSTLLRIVAGLDTDFRGSVKLGGIALDGPSPRAGVIFQEPRLLPWLSIADNVGFAAGPRGGREPSVARLLDEVGLAGVARQLPATLSGGMAQRAAIARGLFGEPDLLLLDEPFSAVDAITRMRLQTLLLDVVERHRTAAIVVTHDLDEALYLGDRVLMLAPNPGRIDDEIHVEVARPRDRRDPTLAVLRARLLDAFQQLQDRADETKRRTLDLQGAEA</sequence>
<protein>
    <recommendedName>
        <fullName evidence="1">Aliphatic sulfonates import ATP-binding protein SsuB 2</fullName>
        <ecNumber evidence="1">7.6.2.14</ecNumber>
    </recommendedName>
</protein>
<name>SSUB2_BURL3</name>
<keyword id="KW-0067">ATP-binding</keyword>
<keyword id="KW-0997">Cell inner membrane</keyword>
<keyword id="KW-1003">Cell membrane</keyword>
<keyword id="KW-0472">Membrane</keyword>
<keyword id="KW-0547">Nucleotide-binding</keyword>
<keyword id="KW-1278">Translocase</keyword>
<keyword id="KW-0813">Transport</keyword>
<accession>Q39LW7</accession>
<evidence type="ECO:0000255" key="1">
    <source>
        <dbReference type="HAMAP-Rule" id="MF_01724"/>
    </source>
</evidence>
<feature type="chain" id="PRO_0000279904" description="Aliphatic sulfonates import ATP-binding protein SsuB 2">
    <location>
        <begin position="1"/>
        <end position="273"/>
    </location>
</feature>
<feature type="domain" description="ABC transporter" evidence="1">
    <location>
        <begin position="17"/>
        <end position="241"/>
    </location>
</feature>
<feature type="binding site" evidence="1">
    <location>
        <begin position="50"/>
        <end position="57"/>
    </location>
    <ligand>
        <name>ATP</name>
        <dbReference type="ChEBI" id="CHEBI:30616"/>
    </ligand>
</feature>
<organism>
    <name type="scientific">Burkholderia lata (strain ATCC 17760 / DSM 23089 / LMG 22485 / NCIMB 9086 / R18194 / 383)</name>
    <dbReference type="NCBI Taxonomy" id="482957"/>
    <lineage>
        <taxon>Bacteria</taxon>
        <taxon>Pseudomonadati</taxon>
        <taxon>Pseudomonadota</taxon>
        <taxon>Betaproteobacteria</taxon>
        <taxon>Burkholderiales</taxon>
        <taxon>Burkholderiaceae</taxon>
        <taxon>Burkholderia</taxon>
        <taxon>Burkholderia cepacia complex</taxon>
    </lineage>
</organism>
<proteinExistence type="inferred from homology"/>
<gene>
    <name evidence="1" type="primary">ssuB2</name>
    <name type="ordered locus">Bcep18194_C7505</name>
</gene>